<name>BAMB_LEGPA</name>
<accession>Q5X521</accession>
<gene>
    <name evidence="1" type="primary">bamB</name>
    <name type="ordered locus">lpp1499</name>
</gene>
<evidence type="ECO:0000255" key="1">
    <source>
        <dbReference type="HAMAP-Rule" id="MF_00923"/>
    </source>
</evidence>
<sequence>MKIRILVLILCALTQGCTYVDDYMLGKDNTPQPKELKEIQPKVKMAQSWTTPVGKAHKTNEYLNIKPAIRGDVIYTADASGLVQAVNRKDGQIKWSTALKNNIVSGPTVAAGYVAVGTNASTLVLLNQSDGKEIWQNKVSAEVLAPPAISHQKVIAKTIDGKVYAIDAVNGKQLWVADHGAPSLVLKASSSPIIVDDLVLVGFSDGKLDALELQTGRLIWQRSIAYGTGASDVERLVDIDSDPIISNNVAYLATYQGYVGALSLSNGQFIWRKPASVYKNMLLSHNNLYFTDSNDVLWSLNSSTGQVNWKQTSLKARGLTAPALVGGNLAVGDKTGYLHILSTQTGELLGRSQLSGGVTVSPSVSGKNMYVLTNNGMLNQLSVS</sequence>
<comment type="function">
    <text evidence="1">Part of the outer membrane protein assembly complex, which is involved in assembly and insertion of beta-barrel proteins into the outer membrane.</text>
</comment>
<comment type="subunit">
    <text evidence="1">Part of the Bam complex.</text>
</comment>
<comment type="subcellular location">
    <subcellularLocation>
        <location evidence="1">Cell outer membrane</location>
        <topology evidence="1">Lipid-anchor</topology>
    </subcellularLocation>
</comment>
<comment type="similarity">
    <text evidence="1">Belongs to the BamB family.</text>
</comment>
<keyword id="KW-0998">Cell outer membrane</keyword>
<keyword id="KW-0449">Lipoprotein</keyword>
<keyword id="KW-0472">Membrane</keyword>
<keyword id="KW-0564">Palmitate</keyword>
<keyword id="KW-0732">Signal</keyword>
<feature type="signal peptide" evidence="1">
    <location>
        <begin position="1"/>
        <end position="16"/>
    </location>
</feature>
<feature type="chain" id="PRO_0000417681" description="Outer membrane protein assembly factor BamB">
    <location>
        <begin position="17"/>
        <end position="384"/>
    </location>
</feature>
<feature type="lipid moiety-binding region" description="N-palmitoyl cysteine" evidence="1">
    <location>
        <position position="17"/>
    </location>
</feature>
<feature type="lipid moiety-binding region" description="S-diacylglycerol cysteine" evidence="1">
    <location>
        <position position="17"/>
    </location>
</feature>
<dbReference type="EMBL" id="CR628336">
    <property type="protein sequence ID" value="CAH12650.1"/>
    <property type="molecule type" value="Genomic_DNA"/>
</dbReference>
<dbReference type="RefSeq" id="WP_011213822.1">
    <property type="nucleotide sequence ID" value="NC_006368.1"/>
</dbReference>
<dbReference type="SMR" id="Q5X521"/>
<dbReference type="KEGG" id="lpp:lpp1499"/>
<dbReference type="LegioList" id="lpp1499"/>
<dbReference type="HOGENOM" id="CLU_027480_0_1_6"/>
<dbReference type="GO" id="GO:0009279">
    <property type="term" value="C:cell outer membrane"/>
    <property type="evidence" value="ECO:0007669"/>
    <property type="project" value="UniProtKB-SubCell"/>
</dbReference>
<dbReference type="GO" id="GO:0043165">
    <property type="term" value="P:Gram-negative-bacterium-type cell outer membrane assembly"/>
    <property type="evidence" value="ECO:0007669"/>
    <property type="project" value="UniProtKB-UniRule"/>
</dbReference>
<dbReference type="GO" id="GO:0051205">
    <property type="term" value="P:protein insertion into membrane"/>
    <property type="evidence" value="ECO:0007669"/>
    <property type="project" value="UniProtKB-UniRule"/>
</dbReference>
<dbReference type="Gene3D" id="2.130.10.10">
    <property type="entry name" value="YVTN repeat-like/Quinoprotein amine dehydrogenase"/>
    <property type="match status" value="1"/>
</dbReference>
<dbReference type="HAMAP" id="MF_00923">
    <property type="entry name" value="OM_assembly_BamB"/>
    <property type="match status" value="1"/>
</dbReference>
<dbReference type="InterPro" id="IPR017687">
    <property type="entry name" value="BamB"/>
</dbReference>
<dbReference type="InterPro" id="IPR018391">
    <property type="entry name" value="PQQ_b-propeller_rpt"/>
</dbReference>
<dbReference type="InterPro" id="IPR002372">
    <property type="entry name" value="PQQ_rpt_dom"/>
</dbReference>
<dbReference type="InterPro" id="IPR011047">
    <property type="entry name" value="Quinoprotein_ADH-like_sf"/>
</dbReference>
<dbReference type="InterPro" id="IPR015943">
    <property type="entry name" value="WD40/YVTN_repeat-like_dom_sf"/>
</dbReference>
<dbReference type="NCBIfam" id="TIGR03300">
    <property type="entry name" value="assembly_YfgL"/>
    <property type="match status" value="1"/>
</dbReference>
<dbReference type="PANTHER" id="PTHR34512">
    <property type="entry name" value="CELL SURFACE PROTEIN"/>
    <property type="match status" value="1"/>
</dbReference>
<dbReference type="PANTHER" id="PTHR34512:SF30">
    <property type="entry name" value="OUTER MEMBRANE PROTEIN ASSEMBLY FACTOR BAMB"/>
    <property type="match status" value="1"/>
</dbReference>
<dbReference type="Pfam" id="PF13360">
    <property type="entry name" value="PQQ_2"/>
    <property type="match status" value="2"/>
</dbReference>
<dbReference type="SMART" id="SM00564">
    <property type="entry name" value="PQQ"/>
    <property type="match status" value="7"/>
</dbReference>
<dbReference type="SUPFAM" id="SSF50998">
    <property type="entry name" value="Quinoprotein alcohol dehydrogenase-like"/>
    <property type="match status" value="1"/>
</dbReference>
<dbReference type="PROSITE" id="PS51257">
    <property type="entry name" value="PROKAR_LIPOPROTEIN"/>
    <property type="match status" value="1"/>
</dbReference>
<organism>
    <name type="scientific">Legionella pneumophila (strain Paris)</name>
    <dbReference type="NCBI Taxonomy" id="297246"/>
    <lineage>
        <taxon>Bacteria</taxon>
        <taxon>Pseudomonadati</taxon>
        <taxon>Pseudomonadota</taxon>
        <taxon>Gammaproteobacteria</taxon>
        <taxon>Legionellales</taxon>
        <taxon>Legionellaceae</taxon>
        <taxon>Legionella</taxon>
    </lineage>
</organism>
<reference key="1">
    <citation type="journal article" date="2004" name="Nat. Genet.">
        <title>Evidence in the Legionella pneumophila genome for exploitation of host cell functions and high genome plasticity.</title>
        <authorList>
            <person name="Cazalet C."/>
            <person name="Rusniok C."/>
            <person name="Brueggemann H."/>
            <person name="Zidane N."/>
            <person name="Magnier A."/>
            <person name="Ma L."/>
            <person name="Tichit M."/>
            <person name="Jarraud S."/>
            <person name="Bouchier C."/>
            <person name="Vandenesch F."/>
            <person name="Kunst F."/>
            <person name="Etienne J."/>
            <person name="Glaser P."/>
            <person name="Buchrieser C."/>
        </authorList>
    </citation>
    <scope>NUCLEOTIDE SEQUENCE [LARGE SCALE GENOMIC DNA]</scope>
    <source>
        <strain>Paris</strain>
    </source>
</reference>
<protein>
    <recommendedName>
        <fullName evidence="1">Outer membrane protein assembly factor BamB</fullName>
    </recommendedName>
</protein>
<proteinExistence type="inferred from homology"/>